<organism>
    <name type="scientific">Penicillium citrinum</name>
    <dbReference type="NCBI Taxonomy" id="5077"/>
    <lineage>
        <taxon>Eukaryota</taxon>
        <taxon>Fungi</taxon>
        <taxon>Dikarya</taxon>
        <taxon>Ascomycota</taxon>
        <taxon>Pezizomycotina</taxon>
        <taxon>Eurotiomycetes</taxon>
        <taxon>Eurotiomycetidae</taxon>
        <taxon>Eurotiales</taxon>
        <taxon>Aspergillaceae</taxon>
        <taxon>Penicillium</taxon>
    </lineage>
</organism>
<protein>
    <recommendedName>
        <fullName evidence="3">Cyclic ether formation enzyme gkaZ</fullName>
        <ecNumber evidence="2">5.-.-.-</ecNumber>
    </recommendedName>
    <alternativeName>
        <fullName evidence="3">GKK1032 biosynthesis cluster protein Z</fullName>
    </alternativeName>
</protein>
<evidence type="ECO:0000255" key="1"/>
<evidence type="ECO:0000269" key="2">
    <source>
    </source>
</evidence>
<evidence type="ECO:0000303" key="3">
    <source>
    </source>
</evidence>
<evidence type="ECO:0000305" key="4"/>
<evidence type="ECO:0000305" key="5">
    <source>
    </source>
</evidence>
<sequence>MTTARALSDGLAYLLACFNAFCIQAHLTSRFSPAFSKNLATQLPHHNKAIFWWLGVSDETLRYMFVSLNAGLGLLLALPGWRSTGLKVALALLCVGFTSDMKLKEKWLLHFLSHLVLLSITMAAIYVR</sequence>
<dbReference type="EC" id="5.-.-.-" evidence="2"/>
<dbReference type="EMBL" id="MW690135">
    <property type="protein sequence ID" value="QXF14610.1"/>
    <property type="molecule type" value="Genomic_DNA"/>
</dbReference>
<dbReference type="OrthoDB" id="5413841at2759"/>
<dbReference type="GO" id="GO:0016020">
    <property type="term" value="C:membrane"/>
    <property type="evidence" value="ECO:0007669"/>
    <property type="project" value="UniProtKB-SubCell"/>
</dbReference>
<dbReference type="GO" id="GO:0016853">
    <property type="term" value="F:isomerase activity"/>
    <property type="evidence" value="ECO:0007669"/>
    <property type="project" value="UniProtKB-KW"/>
</dbReference>
<feature type="signal peptide" evidence="1">
    <location>
        <begin position="1"/>
        <end position="36"/>
    </location>
</feature>
<feature type="chain" id="PRO_0000458432" description="Cyclic ether formation enzyme gkaZ">
    <location>
        <begin position="37"/>
        <end position="128"/>
    </location>
</feature>
<feature type="transmembrane region" description="Helical" evidence="1">
    <location>
        <begin position="61"/>
        <end position="81"/>
    </location>
</feature>
<feature type="transmembrane region" description="Helical" evidence="1">
    <location>
        <begin position="107"/>
        <end position="127"/>
    </location>
</feature>
<comment type="function">
    <text evidence="2 5">Cyclic ether formation enzyme; part of the gene cluster that mediates the biosynthesis of GKK1032, fungal natural products containing a macrocyclic para-cyclophane connected to a decahydrofluorene ring system that show potent antitumor activities (PubMed:33834778). Within the pathway, gkaZ functions synergistically with gkaB and gkaX to form the cyclophane (PubMed:33834778). The pathway begins with the PKS-NRPS gkaA which, with the help of the trans-enoyl reductase gkaC, synthesizes the polyketide-tyrosyl acyl thioester product which can be reductively off-loaded by the terminal reductase (R) domain in gkaA. The alpha/beta hydrolase gkaG is then required to catalyze the subsequent Knoevenagel condensation that affords the 3-pyrrolin-2-one ring, whereas the three proteins gkaB, gkaX and gkaZ then function synergistically to form the cyclophane (Probable).</text>
</comment>
<comment type="pathway">
    <text evidence="2">Mycotoxin biosynthesis.</text>
</comment>
<comment type="subcellular location">
    <subcellularLocation>
        <location evidence="1">Membrane</location>
        <topology evidence="1">Multi-pass membrane protein</topology>
    </subcellularLocation>
</comment>
<comment type="similarity">
    <text evidence="4">Belongs to the cyclic ether formation enzyme xenC family.</text>
</comment>
<name>GKAZ_PENCI</name>
<accession>A0A8F4NUZ8</accession>
<proteinExistence type="evidence at protein level"/>
<gene>
    <name evidence="3" type="primary">gkaZ</name>
</gene>
<reference key="1">
    <citation type="journal article" date="2021" name="J. Am. Chem. Soc.">
        <title>Biosynthesis of para-cyclophane-containing hirsutellone family of fungal natural products.</title>
        <authorList>
            <person name="Ohashi M."/>
            <person name="Kakule T.B."/>
            <person name="Tang M.C."/>
            <person name="Jamieson C.S."/>
            <person name="Liu M."/>
            <person name="Zhao Y.L."/>
            <person name="Houk K.N."/>
            <person name="Tang Y."/>
        </authorList>
    </citation>
    <scope>NUCLEOTIDE SEQUENCE [GENOMIC DNA]</scope>
    <scope>FUNCTION</scope>
    <scope>CATALYTIC ACTIVITY</scope>
    <scope>PATHWAY</scope>
    <source>
        <strain>DSM 1997</strain>
    </source>
</reference>
<keyword id="KW-0413">Isomerase</keyword>
<keyword id="KW-0472">Membrane</keyword>
<keyword id="KW-0732">Signal</keyword>
<keyword id="KW-0812">Transmembrane</keyword>
<keyword id="KW-1133">Transmembrane helix</keyword>
<keyword id="KW-0843">Virulence</keyword>